<gene>
    <name evidence="1" type="primary">rplI</name>
    <name type="ordered locus">YPA_0086</name>
</gene>
<dbReference type="EMBL" id="CP000308">
    <property type="protein sequence ID" value="ABG12055.1"/>
    <property type="molecule type" value="Genomic_DNA"/>
</dbReference>
<dbReference type="RefSeq" id="WP_002210156.1">
    <property type="nucleotide sequence ID" value="NZ_CP009906.1"/>
</dbReference>
<dbReference type="SMR" id="Q1CBW7"/>
<dbReference type="GeneID" id="57975178"/>
<dbReference type="KEGG" id="ypa:YPA_0086"/>
<dbReference type="Proteomes" id="UP000001971">
    <property type="component" value="Chromosome"/>
</dbReference>
<dbReference type="GO" id="GO:1990904">
    <property type="term" value="C:ribonucleoprotein complex"/>
    <property type="evidence" value="ECO:0007669"/>
    <property type="project" value="UniProtKB-KW"/>
</dbReference>
<dbReference type="GO" id="GO:0005840">
    <property type="term" value="C:ribosome"/>
    <property type="evidence" value="ECO:0007669"/>
    <property type="project" value="UniProtKB-KW"/>
</dbReference>
<dbReference type="GO" id="GO:0019843">
    <property type="term" value="F:rRNA binding"/>
    <property type="evidence" value="ECO:0007669"/>
    <property type="project" value="UniProtKB-UniRule"/>
</dbReference>
<dbReference type="GO" id="GO:0003735">
    <property type="term" value="F:structural constituent of ribosome"/>
    <property type="evidence" value="ECO:0007669"/>
    <property type="project" value="InterPro"/>
</dbReference>
<dbReference type="GO" id="GO:0006412">
    <property type="term" value="P:translation"/>
    <property type="evidence" value="ECO:0007669"/>
    <property type="project" value="UniProtKB-UniRule"/>
</dbReference>
<dbReference type="FunFam" id="3.10.430.100:FF:000001">
    <property type="entry name" value="50S ribosomal protein L9"/>
    <property type="match status" value="1"/>
</dbReference>
<dbReference type="FunFam" id="3.40.5.10:FF:000001">
    <property type="entry name" value="50S ribosomal protein L9"/>
    <property type="match status" value="1"/>
</dbReference>
<dbReference type="Gene3D" id="3.10.430.100">
    <property type="entry name" value="Ribosomal protein L9, C-terminal domain"/>
    <property type="match status" value="1"/>
</dbReference>
<dbReference type="Gene3D" id="3.40.5.10">
    <property type="entry name" value="Ribosomal protein L9, N-terminal domain"/>
    <property type="match status" value="1"/>
</dbReference>
<dbReference type="HAMAP" id="MF_00503">
    <property type="entry name" value="Ribosomal_bL9"/>
    <property type="match status" value="1"/>
</dbReference>
<dbReference type="InterPro" id="IPR000244">
    <property type="entry name" value="Ribosomal_bL9"/>
</dbReference>
<dbReference type="InterPro" id="IPR009027">
    <property type="entry name" value="Ribosomal_bL9/RNase_H1_N"/>
</dbReference>
<dbReference type="InterPro" id="IPR020594">
    <property type="entry name" value="Ribosomal_bL9_bac/chp"/>
</dbReference>
<dbReference type="InterPro" id="IPR020069">
    <property type="entry name" value="Ribosomal_bL9_C"/>
</dbReference>
<dbReference type="InterPro" id="IPR036791">
    <property type="entry name" value="Ribosomal_bL9_C_sf"/>
</dbReference>
<dbReference type="InterPro" id="IPR020070">
    <property type="entry name" value="Ribosomal_bL9_N"/>
</dbReference>
<dbReference type="InterPro" id="IPR036935">
    <property type="entry name" value="Ribosomal_bL9_N_sf"/>
</dbReference>
<dbReference type="NCBIfam" id="TIGR00158">
    <property type="entry name" value="L9"/>
    <property type="match status" value="1"/>
</dbReference>
<dbReference type="PANTHER" id="PTHR21368">
    <property type="entry name" value="50S RIBOSOMAL PROTEIN L9"/>
    <property type="match status" value="1"/>
</dbReference>
<dbReference type="Pfam" id="PF03948">
    <property type="entry name" value="Ribosomal_L9_C"/>
    <property type="match status" value="1"/>
</dbReference>
<dbReference type="Pfam" id="PF01281">
    <property type="entry name" value="Ribosomal_L9_N"/>
    <property type="match status" value="1"/>
</dbReference>
<dbReference type="SUPFAM" id="SSF55658">
    <property type="entry name" value="L9 N-domain-like"/>
    <property type="match status" value="1"/>
</dbReference>
<dbReference type="SUPFAM" id="SSF55653">
    <property type="entry name" value="Ribosomal protein L9 C-domain"/>
    <property type="match status" value="1"/>
</dbReference>
<dbReference type="PROSITE" id="PS00651">
    <property type="entry name" value="RIBOSOMAL_L9"/>
    <property type="match status" value="1"/>
</dbReference>
<feature type="chain" id="PRO_0000258496" description="Large ribosomal subunit protein bL9">
    <location>
        <begin position="1"/>
        <end position="150"/>
    </location>
</feature>
<sequence length="150" mass="15861">MQVILLDKVANLGSLGDQVNVKAGYARNFLVPQGKAVPATKKNVEFFEARRAELEAKLADVLAAAEARATKINELVSVTISSKAGDEGKLFGSIGTRDIADAVTAAGVEVAKSEVRLPNGVLRTAGEHEVHFQVHSDVFAKLNVVVVPEA</sequence>
<comment type="function">
    <text evidence="1">Binds to the 23S rRNA.</text>
</comment>
<comment type="similarity">
    <text evidence="1">Belongs to the bacterial ribosomal protein bL9 family.</text>
</comment>
<protein>
    <recommendedName>
        <fullName evidence="1">Large ribosomal subunit protein bL9</fullName>
    </recommendedName>
    <alternativeName>
        <fullName evidence="2">50S ribosomal protein L9</fullName>
    </alternativeName>
</protein>
<organism>
    <name type="scientific">Yersinia pestis bv. Antiqua (strain Antiqua)</name>
    <dbReference type="NCBI Taxonomy" id="360102"/>
    <lineage>
        <taxon>Bacteria</taxon>
        <taxon>Pseudomonadati</taxon>
        <taxon>Pseudomonadota</taxon>
        <taxon>Gammaproteobacteria</taxon>
        <taxon>Enterobacterales</taxon>
        <taxon>Yersiniaceae</taxon>
        <taxon>Yersinia</taxon>
    </lineage>
</organism>
<evidence type="ECO:0000255" key="1">
    <source>
        <dbReference type="HAMAP-Rule" id="MF_00503"/>
    </source>
</evidence>
<evidence type="ECO:0000305" key="2"/>
<name>RL9_YERPA</name>
<accession>Q1CBW7</accession>
<reference key="1">
    <citation type="journal article" date="2006" name="J. Bacteriol.">
        <title>Complete genome sequence of Yersinia pestis strains Antiqua and Nepal516: evidence of gene reduction in an emerging pathogen.</title>
        <authorList>
            <person name="Chain P.S.G."/>
            <person name="Hu P."/>
            <person name="Malfatti S.A."/>
            <person name="Radnedge L."/>
            <person name="Larimer F."/>
            <person name="Vergez L.M."/>
            <person name="Worsham P."/>
            <person name="Chu M.C."/>
            <person name="Andersen G.L."/>
        </authorList>
    </citation>
    <scope>NUCLEOTIDE SEQUENCE [LARGE SCALE GENOMIC DNA]</scope>
    <source>
        <strain>Antiqua</strain>
    </source>
</reference>
<keyword id="KW-0687">Ribonucleoprotein</keyword>
<keyword id="KW-0689">Ribosomal protein</keyword>
<keyword id="KW-0694">RNA-binding</keyword>
<keyword id="KW-0699">rRNA-binding</keyword>
<proteinExistence type="inferred from homology"/>